<evidence type="ECO:0000255" key="1">
    <source>
        <dbReference type="HAMAP-Rule" id="MF_00056"/>
    </source>
</evidence>
<keyword id="KW-0963">Cytoplasm</keyword>
<keyword id="KW-0448">Lipopolysaccharide biosynthesis</keyword>
<keyword id="KW-0808">Transferase</keyword>
<reference key="1">
    <citation type="journal article" date="2007" name="PLoS Genet.">
        <title>Meningococcal genetic variation mechanisms viewed through comparative analysis of serogroup C strain FAM18.</title>
        <authorList>
            <person name="Bentley S.D."/>
            <person name="Vernikos G.S."/>
            <person name="Snyder L.A.S."/>
            <person name="Churcher C."/>
            <person name="Arrowsmith C."/>
            <person name="Chillingworth T."/>
            <person name="Cronin A."/>
            <person name="Davis P.H."/>
            <person name="Holroyd N.E."/>
            <person name="Jagels K."/>
            <person name="Maddison M."/>
            <person name="Moule S."/>
            <person name="Rabbinowitsch E."/>
            <person name="Sharp S."/>
            <person name="Unwin L."/>
            <person name="Whitehead S."/>
            <person name="Quail M.A."/>
            <person name="Achtman M."/>
            <person name="Barrell B.G."/>
            <person name="Saunders N.J."/>
            <person name="Parkhill J."/>
        </authorList>
    </citation>
    <scope>NUCLEOTIDE SEQUENCE [LARGE SCALE GENOMIC DNA]</scope>
    <source>
        <strain>ATCC 700532 / DSM 15464 / FAM18</strain>
    </source>
</reference>
<name>KDSA_NEIMF</name>
<comment type="catalytic activity">
    <reaction evidence="1">
        <text>D-arabinose 5-phosphate + phosphoenolpyruvate + H2O = 3-deoxy-alpha-D-manno-2-octulosonate-8-phosphate + phosphate</text>
        <dbReference type="Rhea" id="RHEA:14053"/>
        <dbReference type="ChEBI" id="CHEBI:15377"/>
        <dbReference type="ChEBI" id="CHEBI:43474"/>
        <dbReference type="ChEBI" id="CHEBI:57693"/>
        <dbReference type="ChEBI" id="CHEBI:58702"/>
        <dbReference type="ChEBI" id="CHEBI:85985"/>
        <dbReference type="EC" id="2.5.1.55"/>
    </reaction>
</comment>
<comment type="pathway">
    <text evidence="1">Carbohydrate biosynthesis; 3-deoxy-D-manno-octulosonate biosynthesis; 3-deoxy-D-manno-octulosonate from D-ribulose 5-phosphate: step 2/3.</text>
</comment>
<comment type="pathway">
    <text evidence="1">Bacterial outer membrane biogenesis; lipopolysaccharide biosynthesis.</text>
</comment>
<comment type="subcellular location">
    <subcellularLocation>
        <location evidence="1">Cytoplasm</location>
    </subcellularLocation>
</comment>
<comment type="similarity">
    <text evidence="1">Belongs to the KdsA family.</text>
</comment>
<gene>
    <name evidence="1" type="primary">kdsA</name>
    <name type="ordered locus">NMC1218</name>
</gene>
<dbReference type="EC" id="2.5.1.55" evidence="1"/>
<dbReference type="EMBL" id="AM421808">
    <property type="protein sequence ID" value="CAM10456.1"/>
    <property type="molecule type" value="Genomic_DNA"/>
</dbReference>
<dbReference type="RefSeq" id="WP_002219191.1">
    <property type="nucleotide sequence ID" value="NC_008767.1"/>
</dbReference>
<dbReference type="SMR" id="A1KUB4"/>
<dbReference type="KEGG" id="nmc:NMC1218"/>
<dbReference type="HOGENOM" id="CLU_036666_0_0_4"/>
<dbReference type="UniPathway" id="UPA00030"/>
<dbReference type="UniPathway" id="UPA00357">
    <property type="reaction ID" value="UER00474"/>
</dbReference>
<dbReference type="Proteomes" id="UP000002286">
    <property type="component" value="Chromosome"/>
</dbReference>
<dbReference type="GO" id="GO:0005737">
    <property type="term" value="C:cytoplasm"/>
    <property type="evidence" value="ECO:0007669"/>
    <property type="project" value="UniProtKB-SubCell"/>
</dbReference>
<dbReference type="GO" id="GO:0008676">
    <property type="term" value="F:3-deoxy-8-phosphooctulonate synthase activity"/>
    <property type="evidence" value="ECO:0007669"/>
    <property type="project" value="UniProtKB-UniRule"/>
</dbReference>
<dbReference type="GO" id="GO:0019294">
    <property type="term" value="P:keto-3-deoxy-D-manno-octulosonic acid biosynthetic process"/>
    <property type="evidence" value="ECO:0007669"/>
    <property type="project" value="UniProtKB-UniRule"/>
</dbReference>
<dbReference type="Gene3D" id="3.20.20.70">
    <property type="entry name" value="Aldolase class I"/>
    <property type="match status" value="1"/>
</dbReference>
<dbReference type="HAMAP" id="MF_00056">
    <property type="entry name" value="KDO8P_synth"/>
    <property type="match status" value="1"/>
</dbReference>
<dbReference type="InterPro" id="IPR013785">
    <property type="entry name" value="Aldolase_TIM"/>
</dbReference>
<dbReference type="InterPro" id="IPR006218">
    <property type="entry name" value="DAHP1/KDSA"/>
</dbReference>
<dbReference type="InterPro" id="IPR006269">
    <property type="entry name" value="KDO8P_synthase"/>
</dbReference>
<dbReference type="NCBIfam" id="TIGR01362">
    <property type="entry name" value="KDO8P_synth"/>
    <property type="match status" value="1"/>
</dbReference>
<dbReference type="NCBIfam" id="NF003543">
    <property type="entry name" value="PRK05198.1"/>
    <property type="match status" value="1"/>
</dbReference>
<dbReference type="NCBIfam" id="NF009109">
    <property type="entry name" value="PRK12457.1"/>
    <property type="match status" value="1"/>
</dbReference>
<dbReference type="PANTHER" id="PTHR21057">
    <property type="entry name" value="PHOSPHO-2-DEHYDRO-3-DEOXYHEPTONATE ALDOLASE"/>
    <property type="match status" value="1"/>
</dbReference>
<dbReference type="Pfam" id="PF00793">
    <property type="entry name" value="DAHP_synth_1"/>
    <property type="match status" value="1"/>
</dbReference>
<dbReference type="SUPFAM" id="SSF51569">
    <property type="entry name" value="Aldolase"/>
    <property type="match status" value="1"/>
</dbReference>
<sequence>MDIKINGITVGNDAPFVLFGGINVLEDLDSTLQTCAHYVEVTRKLGIPYIFKASFDKANRSSIHSYRGVGLEEGLKIFEKVKAEFGIPVITDVHEPHQCQPVAEVCDVIQLPAFLARQTDLVAAMAETGNVINIKKPQFLSPSQMKNIVEKFREAGNGKLILCERGSSFGYDNLVVDMLGFGVMKQTCGNLPVIFDVTHSLQTRDAGSAASGGRRAQALDLALAGMATRLAGLFLESHPDPKLAKCDGPSALPLHLLEDFLIRIKALDDLIKSQPILTIE</sequence>
<accession>A1KUB4</accession>
<organism>
    <name type="scientific">Neisseria meningitidis serogroup C / serotype 2a (strain ATCC 700532 / DSM 15464 / FAM18)</name>
    <dbReference type="NCBI Taxonomy" id="272831"/>
    <lineage>
        <taxon>Bacteria</taxon>
        <taxon>Pseudomonadati</taxon>
        <taxon>Pseudomonadota</taxon>
        <taxon>Betaproteobacteria</taxon>
        <taxon>Neisseriales</taxon>
        <taxon>Neisseriaceae</taxon>
        <taxon>Neisseria</taxon>
    </lineage>
</organism>
<feature type="chain" id="PRO_0000304461" description="2-dehydro-3-deoxyphosphooctonate aldolase">
    <location>
        <begin position="1"/>
        <end position="280"/>
    </location>
</feature>
<proteinExistence type="inferred from homology"/>
<protein>
    <recommendedName>
        <fullName evidence="1">2-dehydro-3-deoxyphosphooctonate aldolase</fullName>
        <ecNumber evidence="1">2.5.1.55</ecNumber>
    </recommendedName>
    <alternativeName>
        <fullName evidence="1">3-deoxy-D-manno-octulosonic acid 8-phosphate synthase</fullName>
    </alternativeName>
    <alternativeName>
        <fullName evidence="1">KDO-8-phosphate synthase</fullName>
        <shortName evidence="1">KDO 8-P synthase</shortName>
        <shortName evidence="1">KDOPS</shortName>
    </alternativeName>
    <alternativeName>
        <fullName evidence="1">Phospho-2-dehydro-3-deoxyoctonate aldolase</fullName>
    </alternativeName>
</protein>